<protein>
    <recommendedName>
        <fullName evidence="4">G antigen 4</fullName>
    </recommendedName>
    <alternativeName>
        <fullName>Cancer/testis antigen 4.4</fullName>
        <shortName>CT4.4</shortName>
    </alternativeName>
</protein>
<proteinExistence type="uncertain"/>
<name>GAGE4_HUMAN</name>
<sequence length="117" mass="12956">MSWRGRSTYYWPRPRRYVQPPEMIGPMRPEQFSDEVEPATPEEGEPATQRQDPAAAQEGEDEGASAGQGPKPEADSQEQGHPQTGCECEDGPDGQEMDPPNPEEVKTPEEGEKQSQC</sequence>
<keyword id="KW-1185">Reference proteome</keyword>
<evidence type="ECO:0000256" key="1">
    <source>
        <dbReference type="SAM" id="MobiDB-lite"/>
    </source>
</evidence>
<evidence type="ECO:0000269" key="2">
    <source>
    </source>
</evidence>
<evidence type="ECO:0000269" key="3">
    <source>
    </source>
</evidence>
<evidence type="ECO:0000305" key="4"/>
<evidence type="ECO:0000312" key="5">
    <source>
        <dbReference type="HGNC" id="HGNC:4101"/>
    </source>
</evidence>
<feature type="chain" id="PRO_0000450574" description="G antigen 4">
    <location>
        <begin position="1"/>
        <end position="117"/>
    </location>
</feature>
<feature type="region of interest" description="Disordered" evidence="1">
    <location>
        <begin position="1"/>
        <end position="117"/>
    </location>
</feature>
<feature type="compositionally biased region" description="Acidic residues" evidence="1">
    <location>
        <begin position="32"/>
        <end position="45"/>
    </location>
</feature>
<feature type="compositionally biased region" description="Acidic residues" evidence="1">
    <location>
        <begin position="87"/>
        <end position="96"/>
    </location>
</feature>
<feature type="compositionally biased region" description="Basic and acidic residues" evidence="1">
    <location>
        <begin position="103"/>
        <end position="117"/>
    </location>
</feature>
<dbReference type="EMBL" id="U19145">
    <property type="protein sequence ID" value="AAA82747.1"/>
    <property type="molecule type" value="mRNA"/>
</dbReference>
<dbReference type="RefSeq" id="NP_001465.1">
    <property type="nucleotide sequence ID" value="NM_001474.1"/>
</dbReference>
<dbReference type="iPTMnet" id="P0DSO3"/>
<dbReference type="jPOST" id="P0DSO3"/>
<dbReference type="MassIVE" id="P0DSO3"/>
<dbReference type="PeptideAtlas" id="P0DSO3"/>
<dbReference type="Pumba" id="P0DSO3"/>
<dbReference type="DNASU" id="2576"/>
<dbReference type="GeneID" id="2576"/>
<dbReference type="KEGG" id="hsa:2576"/>
<dbReference type="AGR" id="HGNC:4101"/>
<dbReference type="CTD" id="2576"/>
<dbReference type="GeneCards" id="GAGE4"/>
<dbReference type="HGNC" id="HGNC:4101">
    <property type="gene designation" value="GAGE4"/>
</dbReference>
<dbReference type="neXtProt" id="NX_P0DSO3"/>
<dbReference type="InParanoid" id="P0DSO3"/>
<dbReference type="OrthoDB" id="17580at9604"/>
<dbReference type="PRO" id="PR:P0DSO3"/>
<dbReference type="Proteomes" id="UP000005640">
    <property type="component" value="Unplaced"/>
</dbReference>
<dbReference type="InterPro" id="IPR031320">
    <property type="entry name" value="GAGE"/>
</dbReference>
<dbReference type="InterPro" id="IPR008625">
    <property type="entry name" value="GAGE_fam"/>
</dbReference>
<dbReference type="PANTHER" id="PTHR14047:SF30">
    <property type="entry name" value="G ANTIGEN 1-RELATED"/>
    <property type="match status" value="1"/>
</dbReference>
<dbReference type="PANTHER" id="PTHR14047">
    <property type="entry name" value="P ANTIGEN FAMILY MEMBER 5-RELATED"/>
    <property type="match status" value="1"/>
</dbReference>
<dbReference type="Pfam" id="PF05831">
    <property type="entry name" value="GAGE"/>
    <property type="match status" value="1"/>
</dbReference>
<dbReference type="SMART" id="SM01379">
    <property type="entry name" value="GAGE"/>
    <property type="match status" value="1"/>
</dbReference>
<organism>
    <name type="scientific">Homo sapiens</name>
    <name type="common">Human</name>
    <dbReference type="NCBI Taxonomy" id="9606"/>
    <lineage>
        <taxon>Eukaryota</taxon>
        <taxon>Metazoa</taxon>
        <taxon>Chordata</taxon>
        <taxon>Craniata</taxon>
        <taxon>Vertebrata</taxon>
        <taxon>Euteleostomi</taxon>
        <taxon>Mammalia</taxon>
        <taxon>Eutheria</taxon>
        <taxon>Euarchontoglires</taxon>
        <taxon>Primates</taxon>
        <taxon>Haplorrhini</taxon>
        <taxon>Catarrhini</taxon>
        <taxon>Hominidae</taxon>
        <taxon>Homo</taxon>
    </lineage>
</organism>
<reference key="1">
    <citation type="journal article" date="1995" name="J. Exp. Med.">
        <title>A new family of genes coding for an antigen recognized by autologous cytolytic T lymphocytes on a human melanoma.</title>
        <authorList>
            <person name="van den Eynde B."/>
            <person name="Peeters O."/>
            <person name="de Backer O."/>
            <person name="Gaugler B."/>
            <person name="Lucas S."/>
            <person name="Boon T."/>
        </authorList>
    </citation>
    <scope>NUCLEOTIDE SEQUENCE [MRNA]</scope>
    <scope>FUNCTION</scope>
    <scope>TISSUE SPECIFICITY</scope>
    <source>
        <tissue>Melanoma</tissue>
    </source>
</reference>
<reference key="2">
    <citation type="journal article" date="1999" name="Cancer Res.">
        <title>Characterization of the GAGE genes that are expressed in various human cancers and in normal testis.</title>
        <authorList>
            <person name="De Backer O."/>
            <person name="Arden K.C."/>
            <person name="Boretti M."/>
            <person name="Vantomme V."/>
            <person name="De Smet C."/>
            <person name="Czekay S."/>
            <person name="Viars C.S."/>
            <person name="De Plaen E."/>
            <person name="Brasseur F."/>
            <person name="Chomez P."/>
            <person name="Van den Eynde B."/>
            <person name="Boon T."/>
            <person name="van der Bruggen P."/>
        </authorList>
    </citation>
    <scope>CHARACTERIZATION OF ANTIGENIC PEPTIDES</scope>
</reference>
<accession>P0DSO3</accession>
<accession>A8MU85</accession>
<accession>Q13065</accession>
<accession>Q13068</accession>
<accession>Q6NT33</accession>
<gene>
    <name evidence="5" type="primary">GAGE4</name>
</gene>
<comment type="function">
    <text evidence="3">Antigen, recognized on melanoma by autologous cytolytic T-lymphocytes.</text>
</comment>
<comment type="tissue specificity">
    <text evidence="3">Expressed in a variety of tumor tissues but not in normal tissues, except testis.</text>
</comment>
<comment type="miscellaneous">
    <text evidence="2 3">This gene belongs to a family of genes organized in clustered repeats. They have a high degree of predicted sequence identity, but differ by scattered single nucleotide substitution. Their sequences contain either the antigenic peptide YYWPRPRRY or YRPRPRRY which is recognized by cytotoxic T-cells.</text>
</comment>
<comment type="similarity">
    <text evidence="4">Belongs to the GAGE family.</text>
</comment>
<comment type="caution">
    <text evidence="4">Product of a dubious gene prediction. Van den Eynde et al (PubMed:7544395) identified this gene on chromosome X, however it is not currently present in the reference genome assembly (GRCh38/hg38).</text>
</comment>